<sequence length="135" mass="15606">MILVVTLACLIAVVCCQCPTTDQGQISKVFKAYDIDGNNKISRVEGTMVFRDADLNRDGALDNNEFSSEWAFYHNDYYSPFFNVADRNHNGRIEFVEGNQGFDHFDKNRDNEISSWEFTQTWMETVRPSSRPIDF</sequence>
<proteinExistence type="evidence at protein level"/>
<organism>
    <name type="scientific">Ruditapes philippinarum</name>
    <name type="common">Japanese carpet shell</name>
    <name type="synonym">Venerupis philippinarum</name>
    <dbReference type="NCBI Taxonomy" id="129788"/>
    <lineage>
        <taxon>Eukaryota</taxon>
        <taxon>Metazoa</taxon>
        <taxon>Spiralia</taxon>
        <taxon>Lophotrochozoa</taxon>
        <taxon>Mollusca</taxon>
        <taxon>Bivalvia</taxon>
        <taxon>Autobranchia</taxon>
        <taxon>Heteroconchia</taxon>
        <taxon>Euheterodonta</taxon>
        <taxon>Imparidentia</taxon>
        <taxon>Neoheterodontei</taxon>
        <taxon>Venerida</taxon>
        <taxon>Veneroidea</taxon>
        <taxon>Veneridae</taxon>
        <taxon>Ruditapes</taxon>
    </lineage>
</organism>
<feature type="signal peptide" evidence="1">
    <location>
        <begin position="1"/>
        <end position="16"/>
    </location>
</feature>
<feature type="chain" id="PRO_0000413029" description="Insoluble matrix shell protein 5" evidence="1">
    <location>
        <begin position="17"/>
        <end position="135"/>
    </location>
</feature>
<feature type="domain" description="EF-hand 1" evidence="2">
    <location>
        <begin position="21"/>
        <end position="56"/>
    </location>
</feature>
<feature type="domain" description="EF-hand 2" evidence="2">
    <location>
        <begin position="93"/>
        <end position="128"/>
    </location>
</feature>
<feature type="binding site" evidence="5">
    <location>
        <position position="34"/>
    </location>
    <ligand>
        <name>Ca(2+)</name>
        <dbReference type="ChEBI" id="CHEBI:29108"/>
        <label>1</label>
    </ligand>
</feature>
<feature type="binding site" evidence="5">
    <location>
        <position position="36"/>
    </location>
    <ligand>
        <name>Ca(2+)</name>
        <dbReference type="ChEBI" id="CHEBI:29108"/>
        <label>1</label>
    </ligand>
</feature>
<feature type="binding site" evidence="5">
    <location>
        <position position="38"/>
    </location>
    <ligand>
        <name>Ca(2+)</name>
        <dbReference type="ChEBI" id="CHEBI:29108"/>
        <label>1</label>
    </ligand>
</feature>
<feature type="binding site" evidence="5">
    <location>
        <position position="40"/>
    </location>
    <ligand>
        <name>Ca(2+)</name>
        <dbReference type="ChEBI" id="CHEBI:29108"/>
        <label>1</label>
    </ligand>
</feature>
<feature type="binding site" evidence="5">
    <location>
        <position position="45"/>
    </location>
    <ligand>
        <name>Ca(2+)</name>
        <dbReference type="ChEBI" id="CHEBI:29108"/>
        <label>1</label>
    </ligand>
</feature>
<feature type="binding site" evidence="2">
    <location>
        <position position="106"/>
    </location>
    <ligand>
        <name>Ca(2+)</name>
        <dbReference type="ChEBI" id="CHEBI:29108"/>
        <label>2</label>
    </ligand>
</feature>
<feature type="binding site" evidence="2">
    <location>
        <position position="108"/>
    </location>
    <ligand>
        <name>Ca(2+)</name>
        <dbReference type="ChEBI" id="CHEBI:29108"/>
        <label>2</label>
    </ligand>
</feature>
<feature type="binding site" evidence="2">
    <location>
        <position position="110"/>
    </location>
    <ligand>
        <name>Ca(2+)</name>
        <dbReference type="ChEBI" id="CHEBI:29108"/>
        <label>2</label>
    </ligand>
</feature>
<feature type="binding site" evidence="2">
    <location>
        <position position="112"/>
    </location>
    <ligand>
        <name>Ca(2+)</name>
        <dbReference type="ChEBI" id="CHEBI:29108"/>
        <label>2</label>
    </ligand>
</feature>
<feature type="binding site" evidence="2">
    <location>
        <position position="117"/>
    </location>
    <ligand>
        <name>Ca(2+)</name>
        <dbReference type="ChEBI" id="CHEBI:29108"/>
        <label>2</label>
    </ligand>
</feature>
<comment type="subcellular location">
    <subcellularLocation>
        <location evidence="3">Secreted</location>
    </subcellularLocation>
</comment>
<comment type="tissue specificity">
    <text evidence="3">Component of the acid-insoluble organic matrix of the calcified shell.</text>
</comment>
<protein>
    <recommendedName>
        <fullName evidence="4">Insoluble matrix shell protein 5</fullName>
        <shortName evidence="4">IMSP5</shortName>
    </recommendedName>
</protein>
<name>IMSP5_RUDPH</name>
<keyword id="KW-0106">Calcium</keyword>
<keyword id="KW-0903">Direct protein sequencing</keyword>
<keyword id="KW-0479">Metal-binding</keyword>
<keyword id="KW-0677">Repeat</keyword>
<keyword id="KW-0964">Secreted</keyword>
<keyword id="KW-0732">Signal</keyword>
<reference evidence="5" key="1">
    <citation type="submission" date="2007-09" db="EMBL/GenBank/DDBJ databases">
        <authorList>
            <person name="Beck A."/>
        </authorList>
    </citation>
    <scope>NUCLEOTIDE SEQUENCE [MRNA]</scope>
</reference>
<reference evidence="5" key="2">
    <citation type="journal article" date="2011" name="Mar. Biotechnol.">
        <title>Proteomic identification of novel proteins from the calcifying shell matrix of the manila clam Venerupis Philippinarum.</title>
        <authorList>
            <person name="Marie B."/>
            <person name="Trinkler N."/>
            <person name="Zanella-Cleon I."/>
            <person name="Guichard N."/>
            <person name="Becchi M."/>
            <person name="Paillard C."/>
            <person name="Marin F."/>
        </authorList>
    </citation>
    <scope>PROTEIN SEQUENCE OF 32-40</scope>
    <source>
        <tissue evidence="3">Shell</tissue>
    </source>
</reference>
<evidence type="ECO:0000255" key="1"/>
<evidence type="ECO:0000255" key="2">
    <source>
        <dbReference type="PROSITE-ProRule" id="PRU00448"/>
    </source>
</evidence>
<evidence type="ECO:0000269" key="3">
    <source>
    </source>
</evidence>
<evidence type="ECO:0000303" key="4">
    <source>
    </source>
</evidence>
<evidence type="ECO:0000305" key="5"/>
<accession>P86986</accession>
<dbReference type="EMBL" id="AM874357">
    <property type="status" value="NOT_ANNOTATED_CDS"/>
    <property type="molecule type" value="mRNA"/>
</dbReference>
<dbReference type="SMR" id="P86986"/>
<dbReference type="GO" id="GO:0005576">
    <property type="term" value="C:extracellular region"/>
    <property type="evidence" value="ECO:0007669"/>
    <property type="project" value="UniProtKB-SubCell"/>
</dbReference>
<dbReference type="GO" id="GO:0005509">
    <property type="term" value="F:calcium ion binding"/>
    <property type="evidence" value="ECO:0007669"/>
    <property type="project" value="InterPro"/>
</dbReference>
<dbReference type="Gene3D" id="1.10.238.10">
    <property type="entry name" value="EF-hand"/>
    <property type="match status" value="2"/>
</dbReference>
<dbReference type="InterPro" id="IPR011992">
    <property type="entry name" value="EF-hand-dom_pair"/>
</dbReference>
<dbReference type="InterPro" id="IPR018247">
    <property type="entry name" value="EF_Hand_1_Ca_BS"/>
</dbReference>
<dbReference type="InterPro" id="IPR002048">
    <property type="entry name" value="EF_hand_dom"/>
</dbReference>
<dbReference type="Pfam" id="PF13202">
    <property type="entry name" value="EF-hand_5"/>
    <property type="match status" value="4"/>
</dbReference>
<dbReference type="SUPFAM" id="SSF47473">
    <property type="entry name" value="EF-hand"/>
    <property type="match status" value="1"/>
</dbReference>
<dbReference type="PROSITE" id="PS00018">
    <property type="entry name" value="EF_HAND_1"/>
    <property type="match status" value="2"/>
</dbReference>
<dbReference type="PROSITE" id="PS50222">
    <property type="entry name" value="EF_HAND_2"/>
    <property type="match status" value="2"/>
</dbReference>